<protein>
    <recommendedName>
        <fullName>Cytochrome b</fullName>
    </recommendedName>
    <alternativeName>
        <fullName>Complex III subunit 3</fullName>
    </alternativeName>
    <alternativeName>
        <fullName>Complex III subunit III</fullName>
    </alternativeName>
    <alternativeName>
        <fullName>Cytochrome b-c1 complex subunit 3</fullName>
    </alternativeName>
    <alternativeName>
        <fullName>Ubiquinol-cytochrome-c reductase complex cytochrome b subunit</fullName>
    </alternativeName>
</protein>
<keyword id="KW-0249">Electron transport</keyword>
<keyword id="KW-0349">Heme</keyword>
<keyword id="KW-0408">Iron</keyword>
<keyword id="KW-0472">Membrane</keyword>
<keyword id="KW-0479">Metal-binding</keyword>
<keyword id="KW-0496">Mitochondrion</keyword>
<keyword id="KW-0999">Mitochondrion inner membrane</keyword>
<keyword id="KW-0679">Respiratory chain</keyword>
<keyword id="KW-0812">Transmembrane</keyword>
<keyword id="KW-1133">Transmembrane helix</keyword>
<keyword id="KW-0813">Transport</keyword>
<keyword id="KW-0830">Ubiquinone</keyword>
<dbReference type="EMBL" id="AY196165">
    <property type="protein sequence ID" value="AAP35016.1"/>
    <property type="molecule type" value="Genomic_DNA"/>
</dbReference>
<dbReference type="SMR" id="Q6XZH2"/>
<dbReference type="GO" id="GO:0005743">
    <property type="term" value="C:mitochondrial inner membrane"/>
    <property type="evidence" value="ECO:0007669"/>
    <property type="project" value="UniProtKB-SubCell"/>
</dbReference>
<dbReference type="GO" id="GO:0045275">
    <property type="term" value="C:respiratory chain complex III"/>
    <property type="evidence" value="ECO:0007669"/>
    <property type="project" value="InterPro"/>
</dbReference>
<dbReference type="GO" id="GO:0046872">
    <property type="term" value="F:metal ion binding"/>
    <property type="evidence" value="ECO:0007669"/>
    <property type="project" value="UniProtKB-KW"/>
</dbReference>
<dbReference type="GO" id="GO:0008121">
    <property type="term" value="F:ubiquinol-cytochrome-c reductase activity"/>
    <property type="evidence" value="ECO:0007669"/>
    <property type="project" value="InterPro"/>
</dbReference>
<dbReference type="GO" id="GO:0006122">
    <property type="term" value="P:mitochondrial electron transport, ubiquinol to cytochrome c"/>
    <property type="evidence" value="ECO:0007669"/>
    <property type="project" value="TreeGrafter"/>
</dbReference>
<dbReference type="CDD" id="cd00290">
    <property type="entry name" value="cytochrome_b_C"/>
    <property type="match status" value="1"/>
</dbReference>
<dbReference type="CDD" id="cd00284">
    <property type="entry name" value="Cytochrome_b_N"/>
    <property type="match status" value="1"/>
</dbReference>
<dbReference type="FunFam" id="1.20.810.10:FF:000002">
    <property type="entry name" value="Cytochrome b"/>
    <property type="match status" value="1"/>
</dbReference>
<dbReference type="Gene3D" id="1.20.810.10">
    <property type="entry name" value="Cytochrome Bc1 Complex, Chain C"/>
    <property type="match status" value="1"/>
</dbReference>
<dbReference type="InterPro" id="IPR005798">
    <property type="entry name" value="Cyt_b/b6_C"/>
</dbReference>
<dbReference type="InterPro" id="IPR036150">
    <property type="entry name" value="Cyt_b/b6_C_sf"/>
</dbReference>
<dbReference type="InterPro" id="IPR005797">
    <property type="entry name" value="Cyt_b/b6_N"/>
</dbReference>
<dbReference type="InterPro" id="IPR027387">
    <property type="entry name" value="Cytb/b6-like_sf"/>
</dbReference>
<dbReference type="InterPro" id="IPR030689">
    <property type="entry name" value="Cytochrome_b"/>
</dbReference>
<dbReference type="InterPro" id="IPR048260">
    <property type="entry name" value="Cytochrome_b_C_euk/bac"/>
</dbReference>
<dbReference type="InterPro" id="IPR048259">
    <property type="entry name" value="Cytochrome_b_N_euk/bac"/>
</dbReference>
<dbReference type="InterPro" id="IPR016174">
    <property type="entry name" value="Di-haem_cyt_TM"/>
</dbReference>
<dbReference type="PANTHER" id="PTHR19271">
    <property type="entry name" value="CYTOCHROME B"/>
    <property type="match status" value="1"/>
</dbReference>
<dbReference type="PANTHER" id="PTHR19271:SF16">
    <property type="entry name" value="CYTOCHROME B"/>
    <property type="match status" value="1"/>
</dbReference>
<dbReference type="Pfam" id="PF00032">
    <property type="entry name" value="Cytochrom_B_C"/>
    <property type="match status" value="1"/>
</dbReference>
<dbReference type="Pfam" id="PF00033">
    <property type="entry name" value="Cytochrome_B"/>
    <property type="match status" value="1"/>
</dbReference>
<dbReference type="PIRSF" id="PIRSF038885">
    <property type="entry name" value="COB"/>
    <property type="match status" value="1"/>
</dbReference>
<dbReference type="SUPFAM" id="SSF81648">
    <property type="entry name" value="a domain/subunit of cytochrome bc1 complex (Ubiquinol-cytochrome c reductase)"/>
    <property type="match status" value="1"/>
</dbReference>
<dbReference type="SUPFAM" id="SSF81342">
    <property type="entry name" value="Transmembrane di-heme cytochromes"/>
    <property type="match status" value="1"/>
</dbReference>
<dbReference type="PROSITE" id="PS51003">
    <property type="entry name" value="CYTB_CTER"/>
    <property type="match status" value="1"/>
</dbReference>
<dbReference type="PROSITE" id="PS51002">
    <property type="entry name" value="CYTB_NTER"/>
    <property type="match status" value="1"/>
</dbReference>
<sequence length="379" mass="42676">MKILRKNHPLLKIVNHSFIDLPTPSNISSWWNFGSLLGMCLMIQILTGLFLAMHYTSDTTTAFSSVAHICRDVNYGWLIRYLHANGASMFFICLFIHVGRGIYYGSYVLSETWNIGIILFLTTMATAFVGYVLPWGQMSFWGATVITNLLSAIPYIGNTLVEWIWGGFSVDKATLTRFFAFHFILPFIITAFALVHLLFLHETGSNNPSGLNSDSDKIPFHPYYTTKDLLGIFLLLLVLMILALFFPDILGDPDNFTPANPLNTPAHIKPEWYFLFAYAILRSIPNKLGGVLALVLSILILAAFPLLNNSKQHGLIFRPITQVIYWIFIANLLVLTWIGGQPVEYPFTMIGQIASITYFAIIIILIPISNTIENNIIKL</sequence>
<evidence type="ECO:0000250" key="1"/>
<evidence type="ECO:0000250" key="2">
    <source>
        <dbReference type="UniProtKB" id="P00157"/>
    </source>
</evidence>
<evidence type="ECO:0000255" key="3">
    <source>
        <dbReference type="PROSITE-ProRule" id="PRU00967"/>
    </source>
</evidence>
<evidence type="ECO:0000255" key="4">
    <source>
        <dbReference type="PROSITE-ProRule" id="PRU00968"/>
    </source>
</evidence>
<organism>
    <name type="scientific">Akodon spegazzinii</name>
    <name type="common">Spegazzini's grass mouse</name>
    <dbReference type="NCBI Taxonomy" id="230187"/>
    <lineage>
        <taxon>Eukaryota</taxon>
        <taxon>Metazoa</taxon>
        <taxon>Chordata</taxon>
        <taxon>Craniata</taxon>
        <taxon>Vertebrata</taxon>
        <taxon>Euteleostomi</taxon>
        <taxon>Mammalia</taxon>
        <taxon>Eutheria</taxon>
        <taxon>Euarchontoglires</taxon>
        <taxon>Glires</taxon>
        <taxon>Rodentia</taxon>
        <taxon>Myomorpha</taxon>
        <taxon>Muroidea</taxon>
        <taxon>Cricetidae</taxon>
        <taxon>Sigmodontinae</taxon>
        <taxon>Akodon</taxon>
    </lineage>
</organism>
<proteinExistence type="inferred from homology"/>
<reference key="1">
    <citation type="journal article" date="2003" name="Mamm. Biol.">
        <title>Phylogenetic analysis of sigmodontine rodents (Muroidea), with special reference to the akodont genus Deltamys.</title>
        <authorList>
            <person name="D'Elia G."/>
            <person name="Gonzalez E.M."/>
            <person name="Pardinas U.F.J."/>
        </authorList>
    </citation>
    <scope>NUCLEOTIDE SEQUENCE [GENOMIC DNA]</scope>
</reference>
<name>CYB_AKOSP</name>
<feature type="chain" id="PRO_0000254980" description="Cytochrome b">
    <location>
        <begin position="1"/>
        <end position="379"/>
    </location>
</feature>
<feature type="transmembrane region" description="Helical" evidence="2">
    <location>
        <begin position="33"/>
        <end position="53"/>
    </location>
</feature>
<feature type="transmembrane region" description="Helical" evidence="2">
    <location>
        <begin position="77"/>
        <end position="98"/>
    </location>
</feature>
<feature type="transmembrane region" description="Helical" evidence="2">
    <location>
        <begin position="113"/>
        <end position="133"/>
    </location>
</feature>
<feature type="transmembrane region" description="Helical" evidence="2">
    <location>
        <begin position="178"/>
        <end position="198"/>
    </location>
</feature>
<feature type="transmembrane region" description="Helical" evidence="2">
    <location>
        <begin position="226"/>
        <end position="246"/>
    </location>
</feature>
<feature type="transmembrane region" description="Helical" evidence="2">
    <location>
        <begin position="288"/>
        <end position="308"/>
    </location>
</feature>
<feature type="transmembrane region" description="Helical" evidence="2">
    <location>
        <begin position="320"/>
        <end position="340"/>
    </location>
</feature>
<feature type="transmembrane region" description="Helical" evidence="2">
    <location>
        <begin position="347"/>
        <end position="367"/>
    </location>
</feature>
<feature type="binding site" description="axial binding residue" evidence="2">
    <location>
        <position position="83"/>
    </location>
    <ligand>
        <name>heme b</name>
        <dbReference type="ChEBI" id="CHEBI:60344"/>
        <label>b562</label>
    </ligand>
    <ligandPart>
        <name>Fe</name>
        <dbReference type="ChEBI" id="CHEBI:18248"/>
    </ligandPart>
</feature>
<feature type="binding site" description="axial binding residue" evidence="2">
    <location>
        <position position="97"/>
    </location>
    <ligand>
        <name>heme b</name>
        <dbReference type="ChEBI" id="CHEBI:60344"/>
        <label>b566</label>
    </ligand>
    <ligandPart>
        <name>Fe</name>
        <dbReference type="ChEBI" id="CHEBI:18248"/>
    </ligandPart>
</feature>
<feature type="binding site" description="axial binding residue" evidence="2">
    <location>
        <position position="182"/>
    </location>
    <ligand>
        <name>heme b</name>
        <dbReference type="ChEBI" id="CHEBI:60344"/>
        <label>b562</label>
    </ligand>
    <ligandPart>
        <name>Fe</name>
        <dbReference type="ChEBI" id="CHEBI:18248"/>
    </ligandPart>
</feature>
<feature type="binding site" description="axial binding residue" evidence="2">
    <location>
        <position position="196"/>
    </location>
    <ligand>
        <name>heme b</name>
        <dbReference type="ChEBI" id="CHEBI:60344"/>
        <label>b566</label>
    </ligand>
    <ligandPart>
        <name>Fe</name>
        <dbReference type="ChEBI" id="CHEBI:18248"/>
    </ligandPart>
</feature>
<feature type="binding site" evidence="2">
    <location>
        <position position="201"/>
    </location>
    <ligand>
        <name>a ubiquinone</name>
        <dbReference type="ChEBI" id="CHEBI:16389"/>
    </ligand>
</feature>
<geneLocation type="mitochondrion"/>
<comment type="function">
    <text evidence="2">Component of the ubiquinol-cytochrome c reductase complex (complex III or cytochrome b-c1 complex) that is part of the mitochondrial respiratory chain. The b-c1 complex mediates electron transfer from ubiquinol to cytochrome c. Contributes to the generation of a proton gradient across the mitochondrial membrane that is then used for ATP synthesis.</text>
</comment>
<comment type="cofactor">
    <cofactor evidence="2">
        <name>heme b</name>
        <dbReference type="ChEBI" id="CHEBI:60344"/>
    </cofactor>
    <text evidence="2">Binds 2 heme b groups non-covalently.</text>
</comment>
<comment type="subunit">
    <text evidence="2">The cytochrome bc1 complex contains 11 subunits: 3 respiratory subunits (MT-CYB, CYC1 and UQCRFS1), 2 core proteins (UQCRC1 and UQCRC2) and 6 low-molecular weight proteins (UQCRH/QCR6, UQCRB/QCR7, UQCRQ/QCR8, UQCR10/QCR9, UQCR11/QCR10 and a cleavage product of UQCRFS1). This cytochrome bc1 complex then forms a dimer.</text>
</comment>
<comment type="subcellular location">
    <subcellularLocation>
        <location evidence="2">Mitochondrion inner membrane</location>
        <topology evidence="2">Multi-pass membrane protein</topology>
    </subcellularLocation>
</comment>
<comment type="miscellaneous">
    <text evidence="1">Heme 1 (or BL or b562) is low-potential and absorbs at about 562 nm, and heme 2 (or BH or b566) is high-potential and absorbs at about 566 nm.</text>
</comment>
<comment type="similarity">
    <text evidence="3 4">Belongs to the cytochrome b family.</text>
</comment>
<comment type="caution">
    <text evidence="2">The full-length protein contains only eight transmembrane helices, not nine as predicted by bioinformatics tools.</text>
</comment>
<accession>Q6XZH2</accession>
<gene>
    <name type="primary">MT-CYB</name>
    <name type="synonym">COB</name>
    <name type="synonym">CYTB</name>
    <name type="synonym">MTCYB</name>
</gene>